<protein>
    <recommendedName>
        <fullName evidence="1">Large ribosomal subunit protein uL13</fullName>
    </recommendedName>
    <alternativeName>
        <fullName evidence="2">50S ribosomal protein L13</fullName>
    </alternativeName>
</protein>
<keyword id="KW-0687">Ribonucleoprotein</keyword>
<keyword id="KW-0689">Ribosomal protein</keyword>
<sequence length="142" mass="15811">MATYMANAKTVSPRWLLVNAEGKTLGRLASRIAAILRGKHKAEFTPHVDAGDFVVVINVDKLKVTGNKTQDKQYHHHSGYPGGLKTINFADLQAKKPQRILELAIKGMLPKGPLGRQLYRKLKIYAGDQHPHQAQQPELIDL</sequence>
<comment type="function">
    <text evidence="1">This protein is one of the early assembly proteins of the 50S ribosomal subunit, although it is not seen to bind rRNA by itself. It is important during the early stages of 50S assembly.</text>
</comment>
<comment type="subunit">
    <text evidence="1">Part of the 50S ribosomal subunit.</text>
</comment>
<comment type="similarity">
    <text evidence="1">Belongs to the universal ribosomal protein uL13 family.</text>
</comment>
<name>RL13_COXBN</name>
<evidence type="ECO:0000255" key="1">
    <source>
        <dbReference type="HAMAP-Rule" id="MF_01366"/>
    </source>
</evidence>
<evidence type="ECO:0000305" key="2"/>
<reference key="1">
    <citation type="journal article" date="2009" name="Infect. Immun.">
        <title>Comparative genomics reveal extensive transposon-mediated genomic plasticity and diversity among potential effector proteins within the genus Coxiella.</title>
        <authorList>
            <person name="Beare P.A."/>
            <person name="Unsworth N."/>
            <person name="Andoh M."/>
            <person name="Voth D.E."/>
            <person name="Omsland A."/>
            <person name="Gilk S.D."/>
            <person name="Williams K.P."/>
            <person name="Sobral B.W."/>
            <person name="Kupko J.J. III"/>
            <person name="Porcella S.F."/>
            <person name="Samuel J.E."/>
            <person name="Heinzen R.A."/>
        </authorList>
    </citation>
    <scope>NUCLEOTIDE SEQUENCE [LARGE SCALE GENOMIC DNA]</scope>
    <source>
        <strain>Dugway 5J108-111</strain>
    </source>
</reference>
<gene>
    <name evidence="1" type="primary">rplM</name>
    <name type="ordered locus">CBUD_0252</name>
</gene>
<organism>
    <name type="scientific">Coxiella burnetii (strain Dugway 5J108-111)</name>
    <dbReference type="NCBI Taxonomy" id="434922"/>
    <lineage>
        <taxon>Bacteria</taxon>
        <taxon>Pseudomonadati</taxon>
        <taxon>Pseudomonadota</taxon>
        <taxon>Gammaproteobacteria</taxon>
        <taxon>Legionellales</taxon>
        <taxon>Coxiellaceae</taxon>
        <taxon>Coxiella</taxon>
    </lineage>
</organism>
<dbReference type="EMBL" id="CP000733">
    <property type="protein sequence ID" value="ABS76628.1"/>
    <property type="molecule type" value="Genomic_DNA"/>
</dbReference>
<dbReference type="RefSeq" id="WP_005770421.1">
    <property type="nucleotide sequence ID" value="NC_009727.1"/>
</dbReference>
<dbReference type="SMR" id="A9KBY0"/>
<dbReference type="KEGG" id="cbd:CBUD_0252"/>
<dbReference type="HOGENOM" id="CLU_082184_2_2_6"/>
<dbReference type="Proteomes" id="UP000008555">
    <property type="component" value="Chromosome"/>
</dbReference>
<dbReference type="GO" id="GO:0022625">
    <property type="term" value="C:cytosolic large ribosomal subunit"/>
    <property type="evidence" value="ECO:0007669"/>
    <property type="project" value="TreeGrafter"/>
</dbReference>
<dbReference type="GO" id="GO:0003729">
    <property type="term" value="F:mRNA binding"/>
    <property type="evidence" value="ECO:0007669"/>
    <property type="project" value="TreeGrafter"/>
</dbReference>
<dbReference type="GO" id="GO:0003735">
    <property type="term" value="F:structural constituent of ribosome"/>
    <property type="evidence" value="ECO:0007669"/>
    <property type="project" value="InterPro"/>
</dbReference>
<dbReference type="GO" id="GO:0017148">
    <property type="term" value="P:negative regulation of translation"/>
    <property type="evidence" value="ECO:0007669"/>
    <property type="project" value="TreeGrafter"/>
</dbReference>
<dbReference type="GO" id="GO:0006412">
    <property type="term" value="P:translation"/>
    <property type="evidence" value="ECO:0007669"/>
    <property type="project" value="UniProtKB-UniRule"/>
</dbReference>
<dbReference type="CDD" id="cd00392">
    <property type="entry name" value="Ribosomal_L13"/>
    <property type="match status" value="1"/>
</dbReference>
<dbReference type="FunFam" id="3.90.1180.10:FF:000001">
    <property type="entry name" value="50S ribosomal protein L13"/>
    <property type="match status" value="1"/>
</dbReference>
<dbReference type="Gene3D" id="3.90.1180.10">
    <property type="entry name" value="Ribosomal protein L13"/>
    <property type="match status" value="1"/>
</dbReference>
<dbReference type="HAMAP" id="MF_01366">
    <property type="entry name" value="Ribosomal_uL13"/>
    <property type="match status" value="1"/>
</dbReference>
<dbReference type="InterPro" id="IPR005822">
    <property type="entry name" value="Ribosomal_uL13"/>
</dbReference>
<dbReference type="InterPro" id="IPR005823">
    <property type="entry name" value="Ribosomal_uL13_bac-type"/>
</dbReference>
<dbReference type="InterPro" id="IPR023563">
    <property type="entry name" value="Ribosomal_uL13_CS"/>
</dbReference>
<dbReference type="InterPro" id="IPR036899">
    <property type="entry name" value="Ribosomal_uL13_sf"/>
</dbReference>
<dbReference type="NCBIfam" id="TIGR01066">
    <property type="entry name" value="rplM_bact"/>
    <property type="match status" value="1"/>
</dbReference>
<dbReference type="PANTHER" id="PTHR11545:SF2">
    <property type="entry name" value="LARGE RIBOSOMAL SUBUNIT PROTEIN UL13M"/>
    <property type="match status" value="1"/>
</dbReference>
<dbReference type="PANTHER" id="PTHR11545">
    <property type="entry name" value="RIBOSOMAL PROTEIN L13"/>
    <property type="match status" value="1"/>
</dbReference>
<dbReference type="Pfam" id="PF00572">
    <property type="entry name" value="Ribosomal_L13"/>
    <property type="match status" value="1"/>
</dbReference>
<dbReference type="PIRSF" id="PIRSF002181">
    <property type="entry name" value="Ribosomal_L13"/>
    <property type="match status" value="1"/>
</dbReference>
<dbReference type="SUPFAM" id="SSF52161">
    <property type="entry name" value="Ribosomal protein L13"/>
    <property type="match status" value="1"/>
</dbReference>
<dbReference type="PROSITE" id="PS00783">
    <property type="entry name" value="RIBOSOMAL_L13"/>
    <property type="match status" value="1"/>
</dbReference>
<feature type="chain" id="PRO_1000087083" description="Large ribosomal subunit protein uL13">
    <location>
        <begin position="1"/>
        <end position="142"/>
    </location>
</feature>
<proteinExistence type="inferred from homology"/>
<accession>A9KBY0</accession>